<accession>Q9FJ21</accession>
<organism>
    <name type="scientific">Arabidopsis thaliana</name>
    <name type="common">Mouse-ear cress</name>
    <dbReference type="NCBI Taxonomy" id="3702"/>
    <lineage>
        <taxon>Eukaryota</taxon>
        <taxon>Viridiplantae</taxon>
        <taxon>Streptophyta</taxon>
        <taxon>Embryophyta</taxon>
        <taxon>Tracheophyta</taxon>
        <taxon>Spermatophyta</taxon>
        <taxon>Magnoliopsida</taxon>
        <taxon>eudicotyledons</taxon>
        <taxon>Gunneridae</taxon>
        <taxon>Pentapetalae</taxon>
        <taxon>rosids</taxon>
        <taxon>malvids</taxon>
        <taxon>Brassicales</taxon>
        <taxon>Brassicaceae</taxon>
        <taxon>Camelineae</taxon>
        <taxon>Arabidopsis</taxon>
    </lineage>
</organism>
<sequence length="571" mass="62799">MGVDGELKKKKCIIAGVITALLVLMVVAVGITTSRNTSHSEKIVPVQIKTATTAVEAVCAPTDYKETCVNSLMKASPDSTQPLDLIKLGFNVTIRSIEDSIKKASVELTAKAANDKDTKGALELCEKLMNDATDDLKKCLDNFDGFSIPQIEDFVEDLRVWLSGSIAYQQTCMDTFEETNSKLSQDMQKIFKTSRELTSNGLAMITNISNLLGEFNVTGVTGDLGKYARKLLSAEDGIPSWVGPNTRRLMATKGGVKANVVVAHDGSGQYKTINEALNAVPKANQKPFVIYIKQGVYNEKVDVTKKMTHVTFIGDGPTKTKITGSLNYYIGKVKTYLTATVAINGDNFTAKNIGFENTAGPEGHQAVALRVSADLAVFYNCQIDGYQDTLYVHSHRQFFRDCTVSGTVDFIFGDGIVVLQNCNIVVRKPMKSQSCMITAQGRSDKRESTGLVLQNCHITGEPAYIPVKSINKAYLGRPWKEFSRTIIMGTTIDDVIDPAGWLPWNGDFALNTLYYAEYENNGPGSNQAQRVKWPGIKKLSPKQALRFTPARFLRGNLWIPPNRVPYMGNFQ</sequence>
<feature type="signal peptide" evidence="2">
    <location>
        <begin position="1"/>
        <end position="28"/>
    </location>
</feature>
<feature type="chain" id="PRO_0000371706" description="Probable pectinesterase/pectinesterase inhibitor 58">
    <location>
        <begin position="29"/>
        <end position="571"/>
    </location>
</feature>
<feature type="region of interest" description="Pectinesterase inhibitor 58">
    <location>
        <begin position="49"/>
        <end position="204"/>
    </location>
</feature>
<feature type="region of interest" description="Pectinesterase 58">
    <location>
        <begin position="259"/>
        <end position="556"/>
    </location>
</feature>
<feature type="active site" description="Proton donor; for pectinesterase activity" evidence="3">
    <location>
        <position position="388"/>
    </location>
</feature>
<feature type="active site" description="Nucleophile; for pectinesterase activity" evidence="3">
    <location>
        <position position="409"/>
    </location>
</feature>
<feature type="binding site" evidence="1">
    <location>
        <position position="335"/>
    </location>
    <ligand>
        <name>substrate</name>
        <note>for pectinesterase activity</note>
    </ligand>
</feature>
<feature type="binding site" evidence="1">
    <location>
        <position position="365"/>
    </location>
    <ligand>
        <name>substrate</name>
        <note>for pectinesterase activity</note>
    </ligand>
</feature>
<feature type="binding site" evidence="1">
    <location>
        <position position="477"/>
    </location>
    <ligand>
        <name>substrate</name>
        <note>for pectinesterase activity</note>
    </ligand>
</feature>
<feature type="binding site" evidence="1">
    <location>
        <position position="479"/>
    </location>
    <ligand>
        <name>substrate</name>
        <note>for pectinesterase activity</note>
    </ligand>
</feature>
<feature type="site" description="Transition state stabilizer" evidence="1">
    <location>
        <position position="387"/>
    </location>
</feature>
<feature type="glycosylation site" description="N-linked (GlcNAc...) asparagine" evidence="2">
    <location>
        <position position="36"/>
    </location>
</feature>
<feature type="glycosylation site" description="N-linked (GlcNAc...) asparagine" evidence="2">
    <location>
        <position position="91"/>
    </location>
</feature>
<feature type="glycosylation site" description="N-linked (GlcNAc...) asparagine" evidence="2">
    <location>
        <position position="207"/>
    </location>
</feature>
<feature type="glycosylation site" description="N-linked (GlcNAc...) asparagine" evidence="2">
    <location>
        <position position="216"/>
    </location>
</feature>
<feature type="glycosylation site" description="N-linked (GlcNAc...) asparagine" evidence="2">
    <location>
        <position position="347"/>
    </location>
</feature>
<feature type="disulfide bond" evidence="1">
    <location>
        <begin position="402"/>
        <end position="422"/>
    </location>
</feature>
<evidence type="ECO:0000250" key="1"/>
<evidence type="ECO:0000255" key="2"/>
<evidence type="ECO:0000255" key="3">
    <source>
        <dbReference type="PROSITE-ProRule" id="PRU10040"/>
    </source>
</evidence>
<evidence type="ECO:0000269" key="4">
    <source>
    </source>
</evidence>
<evidence type="ECO:0000305" key="5"/>
<comment type="function">
    <text evidence="1">Acts in the modification of cell walls via demethylesterification of cell wall pectin.</text>
</comment>
<comment type="catalytic activity">
    <reaction>
        <text>[(1-&gt;4)-alpha-D-galacturonosyl methyl ester](n) + n H2O = [(1-&gt;4)-alpha-D-galacturonosyl](n) + n methanol + n H(+)</text>
        <dbReference type="Rhea" id="RHEA:22380"/>
        <dbReference type="Rhea" id="RHEA-COMP:14570"/>
        <dbReference type="Rhea" id="RHEA-COMP:14573"/>
        <dbReference type="ChEBI" id="CHEBI:15377"/>
        <dbReference type="ChEBI" id="CHEBI:15378"/>
        <dbReference type="ChEBI" id="CHEBI:17790"/>
        <dbReference type="ChEBI" id="CHEBI:140522"/>
        <dbReference type="ChEBI" id="CHEBI:140523"/>
        <dbReference type="EC" id="3.1.1.11"/>
    </reaction>
</comment>
<comment type="pathway">
    <text>Glycan metabolism; pectin degradation; 2-dehydro-3-deoxy-D-gluconate from pectin: step 1/5.</text>
</comment>
<comment type="subcellular location">
    <subcellularLocation>
        <location evidence="1">Secreted</location>
        <location evidence="1">Cell wall</location>
    </subcellularLocation>
</comment>
<comment type="tissue specificity">
    <text evidence="4">Expressed in siliques, but not in flower buds.</text>
</comment>
<comment type="developmental stage">
    <text evidence="4">Expression restricted to early to mid-stage of silique development. Not found in vegetative stage. Expressed in the micropyle area of the ovule just after fertilization.</text>
</comment>
<comment type="miscellaneous">
    <text>The PMEI region may act as an autoinhibitory domain and prevent untimely PME activity during transport.</text>
</comment>
<comment type="similarity">
    <text evidence="5">In the N-terminal section; belongs to the PMEI family.</text>
</comment>
<comment type="similarity">
    <text evidence="5">In the C-terminal section; belongs to the pectinesterase family.</text>
</comment>
<gene>
    <name type="primary">PME58</name>
    <name type="synonym">ARATH58</name>
    <name type="ordered locus">At5g49180</name>
    <name type="ORF">K21P3.5</name>
</gene>
<proteinExistence type="evidence at transcript level"/>
<dbReference type="EC" id="3.1.1.11"/>
<dbReference type="EMBL" id="AB016872">
    <property type="protein sequence ID" value="BAB10336.1"/>
    <property type="molecule type" value="Genomic_DNA"/>
</dbReference>
<dbReference type="EMBL" id="CP002688">
    <property type="protein sequence ID" value="AED95779.1"/>
    <property type="molecule type" value="Genomic_DNA"/>
</dbReference>
<dbReference type="EMBL" id="AY075680">
    <property type="protein sequence ID" value="AAL77687.1"/>
    <property type="molecule type" value="mRNA"/>
</dbReference>
<dbReference type="EMBL" id="BT002211">
    <property type="protein sequence ID" value="AAN72223.1"/>
    <property type="molecule type" value="mRNA"/>
</dbReference>
<dbReference type="EMBL" id="AY088442">
    <property type="protein sequence ID" value="AAM65978.1"/>
    <property type="molecule type" value="mRNA"/>
</dbReference>
<dbReference type="RefSeq" id="NP_199729.1">
    <property type="nucleotide sequence ID" value="NM_124295.3"/>
</dbReference>
<dbReference type="SMR" id="Q9FJ21"/>
<dbReference type="FunCoup" id="Q9FJ21">
    <property type="interactions" value="139"/>
</dbReference>
<dbReference type="STRING" id="3702.Q9FJ21"/>
<dbReference type="GlyCosmos" id="Q9FJ21">
    <property type="glycosylation" value="5 sites, No reported glycans"/>
</dbReference>
<dbReference type="GlyGen" id="Q9FJ21">
    <property type="glycosylation" value="5 sites"/>
</dbReference>
<dbReference type="PaxDb" id="3702-AT5G49180.1"/>
<dbReference type="ProteomicsDB" id="236574"/>
<dbReference type="EnsemblPlants" id="AT5G49180.1">
    <property type="protein sequence ID" value="AT5G49180.1"/>
    <property type="gene ID" value="AT5G49180"/>
</dbReference>
<dbReference type="GeneID" id="834977"/>
<dbReference type="Gramene" id="AT5G49180.1">
    <property type="protein sequence ID" value="AT5G49180.1"/>
    <property type="gene ID" value="AT5G49180"/>
</dbReference>
<dbReference type="KEGG" id="ath:AT5G49180"/>
<dbReference type="Araport" id="AT5G49180"/>
<dbReference type="TAIR" id="AT5G49180">
    <property type="gene designation" value="PME58"/>
</dbReference>
<dbReference type="eggNOG" id="ENOG502R6WA">
    <property type="taxonomic scope" value="Eukaryota"/>
</dbReference>
<dbReference type="HOGENOM" id="CLU_012243_9_1_1"/>
<dbReference type="InParanoid" id="Q9FJ21"/>
<dbReference type="OMA" id="AYQQTCM"/>
<dbReference type="OrthoDB" id="2019149at2759"/>
<dbReference type="PhylomeDB" id="Q9FJ21"/>
<dbReference type="BioCyc" id="ARA:AT5G49180-MONOMER"/>
<dbReference type="UniPathway" id="UPA00545">
    <property type="reaction ID" value="UER00823"/>
</dbReference>
<dbReference type="PRO" id="PR:Q9FJ21"/>
<dbReference type="Proteomes" id="UP000006548">
    <property type="component" value="Chromosome 5"/>
</dbReference>
<dbReference type="ExpressionAtlas" id="Q9FJ21">
    <property type="expression patterns" value="baseline and differential"/>
</dbReference>
<dbReference type="GO" id="GO:0005576">
    <property type="term" value="C:extracellular region"/>
    <property type="evidence" value="ECO:0007669"/>
    <property type="project" value="UniProtKB-KW"/>
</dbReference>
<dbReference type="GO" id="GO:0004857">
    <property type="term" value="F:enzyme inhibitor activity"/>
    <property type="evidence" value="ECO:0007669"/>
    <property type="project" value="InterPro"/>
</dbReference>
<dbReference type="GO" id="GO:0030599">
    <property type="term" value="F:pectinesterase activity"/>
    <property type="evidence" value="ECO:0007669"/>
    <property type="project" value="UniProtKB-EC"/>
</dbReference>
<dbReference type="GO" id="GO:0042545">
    <property type="term" value="P:cell wall modification"/>
    <property type="evidence" value="ECO:0007669"/>
    <property type="project" value="InterPro"/>
</dbReference>
<dbReference type="GO" id="GO:0048359">
    <property type="term" value="P:mucilage metabolic process involved in seed coat development"/>
    <property type="evidence" value="ECO:0000315"/>
    <property type="project" value="TAIR"/>
</dbReference>
<dbReference type="GO" id="GO:0048358">
    <property type="term" value="P:mucilage pectin biosynthetic process"/>
    <property type="evidence" value="ECO:0000315"/>
    <property type="project" value="TAIR"/>
</dbReference>
<dbReference type="GO" id="GO:0045490">
    <property type="term" value="P:pectin catabolic process"/>
    <property type="evidence" value="ECO:0007669"/>
    <property type="project" value="UniProtKB-UniPathway"/>
</dbReference>
<dbReference type="CDD" id="cd15798">
    <property type="entry name" value="PMEI-like_3"/>
    <property type="match status" value="1"/>
</dbReference>
<dbReference type="FunFam" id="1.20.140.40:FF:000001">
    <property type="entry name" value="Pectinesterase"/>
    <property type="match status" value="1"/>
</dbReference>
<dbReference type="FunFam" id="2.160.20.10:FF:000001">
    <property type="entry name" value="Pectinesterase"/>
    <property type="match status" value="1"/>
</dbReference>
<dbReference type="Gene3D" id="1.20.140.40">
    <property type="entry name" value="Invertase/pectin methylesterase inhibitor family protein"/>
    <property type="match status" value="1"/>
</dbReference>
<dbReference type="Gene3D" id="2.160.20.10">
    <property type="entry name" value="Single-stranded right-handed beta-helix, Pectin lyase-like"/>
    <property type="match status" value="1"/>
</dbReference>
<dbReference type="InterPro" id="IPR035513">
    <property type="entry name" value="Invertase/methylesterase_inhib"/>
</dbReference>
<dbReference type="InterPro" id="IPR012334">
    <property type="entry name" value="Pectin_lyas_fold"/>
</dbReference>
<dbReference type="InterPro" id="IPR011050">
    <property type="entry name" value="Pectin_lyase_fold/virulence"/>
</dbReference>
<dbReference type="InterPro" id="IPR033131">
    <property type="entry name" value="Pectinesterase_Asp_AS"/>
</dbReference>
<dbReference type="InterPro" id="IPR000070">
    <property type="entry name" value="Pectinesterase_cat"/>
</dbReference>
<dbReference type="InterPro" id="IPR006501">
    <property type="entry name" value="Pectinesterase_inhib_dom"/>
</dbReference>
<dbReference type="InterPro" id="IPR018040">
    <property type="entry name" value="Pectinesterase_Tyr_AS"/>
</dbReference>
<dbReference type="NCBIfam" id="TIGR01614">
    <property type="entry name" value="PME_inhib"/>
    <property type="match status" value="1"/>
</dbReference>
<dbReference type="PANTHER" id="PTHR31707">
    <property type="entry name" value="PECTINESTERASE"/>
    <property type="match status" value="1"/>
</dbReference>
<dbReference type="Pfam" id="PF01095">
    <property type="entry name" value="Pectinesterase"/>
    <property type="match status" value="1"/>
</dbReference>
<dbReference type="Pfam" id="PF04043">
    <property type="entry name" value="PMEI"/>
    <property type="match status" value="1"/>
</dbReference>
<dbReference type="SMART" id="SM00856">
    <property type="entry name" value="PMEI"/>
    <property type="match status" value="1"/>
</dbReference>
<dbReference type="SUPFAM" id="SSF51126">
    <property type="entry name" value="Pectin lyase-like"/>
    <property type="match status" value="1"/>
</dbReference>
<dbReference type="SUPFAM" id="SSF101148">
    <property type="entry name" value="Plant invertase/pectin methylesterase inhibitor"/>
    <property type="match status" value="1"/>
</dbReference>
<dbReference type="PROSITE" id="PS00800">
    <property type="entry name" value="PECTINESTERASE_1"/>
    <property type="match status" value="1"/>
</dbReference>
<dbReference type="PROSITE" id="PS00503">
    <property type="entry name" value="PECTINESTERASE_2"/>
    <property type="match status" value="1"/>
</dbReference>
<protein>
    <recommendedName>
        <fullName>Probable pectinesterase/pectinesterase inhibitor 58</fullName>
    </recommendedName>
    <domain>
        <recommendedName>
            <fullName>Pectinesterase inhibitor 58</fullName>
        </recommendedName>
        <alternativeName>
            <fullName>Pectin methylesterase inhibitor 58</fullName>
        </alternativeName>
    </domain>
    <domain>
        <recommendedName>
            <fullName>Pectinesterase 58</fullName>
            <shortName>PE 58</shortName>
            <ecNumber>3.1.1.11</ecNumber>
        </recommendedName>
        <alternativeName>
            <fullName>Pectin methylesterase 58</fullName>
            <shortName>AtPME58</shortName>
        </alternativeName>
    </domain>
</protein>
<keyword id="KW-0063">Aspartyl esterase</keyword>
<keyword id="KW-0134">Cell wall</keyword>
<keyword id="KW-0961">Cell wall biogenesis/degradation</keyword>
<keyword id="KW-1015">Disulfide bond</keyword>
<keyword id="KW-0325">Glycoprotein</keyword>
<keyword id="KW-0378">Hydrolase</keyword>
<keyword id="KW-1185">Reference proteome</keyword>
<keyword id="KW-0964">Secreted</keyword>
<keyword id="KW-0732">Signal</keyword>
<reference key="1">
    <citation type="journal article" date="1998" name="DNA Res.">
        <title>Structural analysis of Arabidopsis thaliana chromosome 5. VIII. Sequence features of the regions of 1,081,958 bp covered by seventeen physically assigned P1 and TAC clones.</title>
        <authorList>
            <person name="Asamizu E."/>
            <person name="Sato S."/>
            <person name="Kaneko T."/>
            <person name="Nakamura Y."/>
            <person name="Kotani H."/>
            <person name="Miyajima N."/>
            <person name="Tabata S."/>
        </authorList>
    </citation>
    <scope>NUCLEOTIDE SEQUENCE [LARGE SCALE GENOMIC DNA]</scope>
    <source>
        <strain>cv. Columbia</strain>
    </source>
</reference>
<reference key="2">
    <citation type="journal article" date="2017" name="Plant J.">
        <title>Araport11: a complete reannotation of the Arabidopsis thaliana reference genome.</title>
        <authorList>
            <person name="Cheng C.Y."/>
            <person name="Krishnakumar V."/>
            <person name="Chan A.P."/>
            <person name="Thibaud-Nissen F."/>
            <person name="Schobel S."/>
            <person name="Town C.D."/>
        </authorList>
    </citation>
    <scope>GENOME REANNOTATION</scope>
    <source>
        <strain>cv. Columbia</strain>
    </source>
</reference>
<reference key="3">
    <citation type="journal article" date="2003" name="Science">
        <title>Empirical analysis of transcriptional activity in the Arabidopsis genome.</title>
        <authorList>
            <person name="Yamada K."/>
            <person name="Lim J."/>
            <person name="Dale J.M."/>
            <person name="Chen H."/>
            <person name="Shinn P."/>
            <person name="Palm C.J."/>
            <person name="Southwick A.M."/>
            <person name="Wu H.C."/>
            <person name="Kim C.J."/>
            <person name="Nguyen M."/>
            <person name="Pham P.K."/>
            <person name="Cheuk R.F."/>
            <person name="Karlin-Newmann G."/>
            <person name="Liu S.X."/>
            <person name="Lam B."/>
            <person name="Sakano H."/>
            <person name="Wu T."/>
            <person name="Yu G."/>
            <person name="Miranda M."/>
            <person name="Quach H.L."/>
            <person name="Tripp M."/>
            <person name="Chang C.H."/>
            <person name="Lee J.M."/>
            <person name="Toriumi M.J."/>
            <person name="Chan M.M."/>
            <person name="Tang C.C."/>
            <person name="Onodera C.S."/>
            <person name="Deng J.M."/>
            <person name="Akiyama K."/>
            <person name="Ansari Y."/>
            <person name="Arakawa T."/>
            <person name="Banh J."/>
            <person name="Banno F."/>
            <person name="Bowser L."/>
            <person name="Brooks S.Y."/>
            <person name="Carninci P."/>
            <person name="Chao Q."/>
            <person name="Choy N."/>
            <person name="Enju A."/>
            <person name="Goldsmith A.D."/>
            <person name="Gurjal M."/>
            <person name="Hansen N.F."/>
            <person name="Hayashizaki Y."/>
            <person name="Johnson-Hopson C."/>
            <person name="Hsuan V.W."/>
            <person name="Iida K."/>
            <person name="Karnes M."/>
            <person name="Khan S."/>
            <person name="Koesema E."/>
            <person name="Ishida J."/>
            <person name="Jiang P.X."/>
            <person name="Jones T."/>
            <person name="Kawai J."/>
            <person name="Kamiya A."/>
            <person name="Meyers C."/>
            <person name="Nakajima M."/>
            <person name="Narusaka M."/>
            <person name="Seki M."/>
            <person name="Sakurai T."/>
            <person name="Satou M."/>
            <person name="Tamse R."/>
            <person name="Vaysberg M."/>
            <person name="Wallender E.K."/>
            <person name="Wong C."/>
            <person name="Yamamura Y."/>
            <person name="Yuan S."/>
            <person name="Shinozaki K."/>
            <person name="Davis R.W."/>
            <person name="Theologis A."/>
            <person name="Ecker J.R."/>
        </authorList>
    </citation>
    <scope>NUCLEOTIDE SEQUENCE [LARGE SCALE MRNA]</scope>
    <source>
        <strain>cv. Columbia</strain>
    </source>
</reference>
<reference key="4">
    <citation type="submission" date="2002-03" db="EMBL/GenBank/DDBJ databases">
        <title>Full-length cDNA from Arabidopsis thaliana.</title>
        <authorList>
            <person name="Brover V.V."/>
            <person name="Troukhan M.E."/>
            <person name="Alexandrov N.A."/>
            <person name="Lu Y.-P."/>
            <person name="Flavell R.B."/>
            <person name="Feldmann K.A."/>
        </authorList>
    </citation>
    <scope>NUCLEOTIDE SEQUENCE [LARGE SCALE MRNA]</scope>
</reference>
<reference key="5">
    <citation type="journal article" date="2004" name="Carbohydr. Res.">
        <title>Pectin methylesterases: sequence-structural features and phylogenetic relationships.</title>
        <authorList>
            <person name="Markovic O."/>
            <person name="Janecek S."/>
        </authorList>
    </citation>
    <scope>GENE FAMILY</scope>
    <scope>NOMENCLATURE</scope>
</reference>
<reference key="6">
    <citation type="journal article" date="2006" name="Planta">
        <title>Comprehensive expression profiling of the pectin methylesterase gene family during silique development in Arabidopsis thaliana.</title>
        <authorList>
            <person name="Louvet R."/>
            <person name="Cavel E."/>
            <person name="Gutierrez L."/>
            <person name="Guenin S."/>
            <person name="Roger D."/>
            <person name="Gillet F."/>
            <person name="Guerineau F."/>
            <person name="Pelloux J."/>
        </authorList>
    </citation>
    <scope>TISSUE SPECIFICITY</scope>
    <scope>DEVELOPMENTAL STAGE</scope>
</reference>
<name>PME58_ARATH</name>